<sequence>MTQKIIKVEGMSCEHCRNAVESALAKLNGVSSAEVNLDENHVRVEYNDSKVTFENMKEAIEEQGYDVK</sequence>
<dbReference type="EMBL" id="AE015929">
    <property type="protein sequence ID" value="AAO05762.1"/>
    <property type="molecule type" value="Genomic_DNA"/>
</dbReference>
<dbReference type="RefSeq" id="NP_765675.1">
    <property type="nucleotide sequence ID" value="NC_004461.1"/>
</dbReference>
<dbReference type="RefSeq" id="WP_001832344.1">
    <property type="nucleotide sequence ID" value="NZ_WBME01000013.1"/>
</dbReference>
<dbReference type="SMR" id="Q8CN01"/>
<dbReference type="GeneID" id="50017798"/>
<dbReference type="KEGG" id="sep:SE_2120"/>
<dbReference type="PATRIC" id="fig|176280.10.peg.2071"/>
<dbReference type="eggNOG" id="COG2608">
    <property type="taxonomic scope" value="Bacteria"/>
</dbReference>
<dbReference type="HOGENOM" id="CLU_134973_10_4_9"/>
<dbReference type="OrthoDB" id="9813965at2"/>
<dbReference type="Proteomes" id="UP000001411">
    <property type="component" value="Chromosome"/>
</dbReference>
<dbReference type="GO" id="GO:0005737">
    <property type="term" value="C:cytoplasm"/>
    <property type="evidence" value="ECO:0007669"/>
    <property type="project" value="UniProtKB-SubCell"/>
</dbReference>
<dbReference type="GO" id="GO:0005507">
    <property type="term" value="F:copper ion binding"/>
    <property type="evidence" value="ECO:0007669"/>
    <property type="project" value="InterPro"/>
</dbReference>
<dbReference type="GO" id="GO:0006825">
    <property type="term" value="P:copper ion transport"/>
    <property type="evidence" value="ECO:0007669"/>
    <property type="project" value="InterPro"/>
</dbReference>
<dbReference type="CDD" id="cd00371">
    <property type="entry name" value="HMA"/>
    <property type="match status" value="1"/>
</dbReference>
<dbReference type="FunFam" id="3.30.70.100:FF:000005">
    <property type="entry name" value="Copper-exporting P-type ATPase A"/>
    <property type="match status" value="1"/>
</dbReference>
<dbReference type="Gene3D" id="3.30.70.100">
    <property type="match status" value="1"/>
</dbReference>
<dbReference type="InterPro" id="IPR049740">
    <property type="entry name" value="CopZ"/>
</dbReference>
<dbReference type="InterPro" id="IPR000428">
    <property type="entry name" value="Cu-bd"/>
</dbReference>
<dbReference type="InterPro" id="IPR017969">
    <property type="entry name" value="Heavy-metal-associated_CS"/>
</dbReference>
<dbReference type="InterPro" id="IPR006122">
    <property type="entry name" value="HMA_Cu_ion-bd"/>
</dbReference>
<dbReference type="InterPro" id="IPR006121">
    <property type="entry name" value="HMA_dom"/>
</dbReference>
<dbReference type="InterPro" id="IPR036163">
    <property type="entry name" value="HMA_dom_sf"/>
</dbReference>
<dbReference type="NCBIfam" id="NF033795">
    <property type="entry name" value="chaper_CopZ_Bs"/>
    <property type="match status" value="1"/>
</dbReference>
<dbReference type="NCBIfam" id="TIGR00003">
    <property type="entry name" value="copper ion binding protein"/>
    <property type="match status" value="1"/>
</dbReference>
<dbReference type="PANTHER" id="PTHR46594">
    <property type="entry name" value="P-TYPE CATION-TRANSPORTING ATPASE"/>
    <property type="match status" value="1"/>
</dbReference>
<dbReference type="PANTHER" id="PTHR46594:SF4">
    <property type="entry name" value="P-TYPE CATION-TRANSPORTING ATPASE"/>
    <property type="match status" value="1"/>
</dbReference>
<dbReference type="Pfam" id="PF00403">
    <property type="entry name" value="HMA"/>
    <property type="match status" value="1"/>
</dbReference>
<dbReference type="PRINTS" id="PR00944">
    <property type="entry name" value="CUEXPORT"/>
</dbReference>
<dbReference type="SUPFAM" id="SSF55008">
    <property type="entry name" value="HMA, heavy metal-associated domain"/>
    <property type="match status" value="1"/>
</dbReference>
<dbReference type="PROSITE" id="PS01047">
    <property type="entry name" value="HMA_1"/>
    <property type="match status" value="1"/>
</dbReference>
<dbReference type="PROSITE" id="PS50846">
    <property type="entry name" value="HMA_2"/>
    <property type="match status" value="1"/>
</dbReference>
<keyword id="KW-0143">Chaperone</keyword>
<keyword id="KW-0186">Copper</keyword>
<keyword id="KW-0963">Cytoplasm</keyword>
<keyword id="KW-0479">Metal-binding</keyword>
<gene>
    <name type="primary">copZ</name>
    <name type="ordered locus">SE_2120</name>
</gene>
<comment type="function">
    <text evidence="1">Chaperone that serves for the intracellular sequestration and transport of Cu(+). Delivers Cu(+) to the copper-exporting P-type ATPase A (CopA) (By similarity).</text>
</comment>
<comment type="subcellular location">
    <subcellularLocation>
        <location evidence="1">Cytoplasm</location>
    </subcellularLocation>
</comment>
<organism>
    <name type="scientific">Staphylococcus epidermidis (strain ATCC 12228 / FDA PCI 1200)</name>
    <dbReference type="NCBI Taxonomy" id="176280"/>
    <lineage>
        <taxon>Bacteria</taxon>
        <taxon>Bacillati</taxon>
        <taxon>Bacillota</taxon>
        <taxon>Bacilli</taxon>
        <taxon>Bacillales</taxon>
        <taxon>Staphylococcaceae</taxon>
        <taxon>Staphylococcus</taxon>
    </lineage>
</organism>
<name>COPZ_STAES</name>
<evidence type="ECO:0000250" key="1"/>
<evidence type="ECO:0000255" key="2">
    <source>
        <dbReference type="PROSITE-ProRule" id="PRU00280"/>
    </source>
</evidence>
<reference key="1">
    <citation type="journal article" date="2003" name="Mol. Microbiol.">
        <title>Genome-based analysis of virulence genes in a non-biofilm-forming Staphylococcus epidermidis strain (ATCC 12228).</title>
        <authorList>
            <person name="Zhang Y.-Q."/>
            <person name="Ren S.-X."/>
            <person name="Li H.-L."/>
            <person name="Wang Y.-X."/>
            <person name="Fu G."/>
            <person name="Yang J."/>
            <person name="Qin Z.-Q."/>
            <person name="Miao Y.-G."/>
            <person name="Wang W.-Y."/>
            <person name="Chen R.-S."/>
            <person name="Shen Y."/>
            <person name="Chen Z."/>
            <person name="Yuan Z.-H."/>
            <person name="Zhao G.-P."/>
            <person name="Qu D."/>
            <person name="Danchin A."/>
            <person name="Wen Y.-M."/>
        </authorList>
    </citation>
    <scope>NUCLEOTIDE SEQUENCE [LARGE SCALE GENOMIC DNA]</scope>
    <source>
        <strain>ATCC 12228 / FDA PCI 1200</strain>
    </source>
</reference>
<feature type="chain" id="PRO_0000351284" description="Copper chaperone CopZ">
    <location>
        <begin position="1"/>
        <end position="68"/>
    </location>
</feature>
<feature type="domain" description="HMA" evidence="2">
    <location>
        <begin position="2"/>
        <end position="68"/>
    </location>
</feature>
<feature type="binding site" evidence="2">
    <location>
        <position position="13"/>
    </location>
    <ligand>
        <name>Cu cation</name>
        <dbReference type="ChEBI" id="CHEBI:23378"/>
    </ligand>
</feature>
<feature type="binding site" evidence="2">
    <location>
        <position position="16"/>
    </location>
    <ligand>
        <name>Cu cation</name>
        <dbReference type="ChEBI" id="CHEBI:23378"/>
    </ligand>
</feature>
<protein>
    <recommendedName>
        <fullName>Copper chaperone CopZ</fullName>
    </recommendedName>
</protein>
<proteinExistence type="inferred from homology"/>
<accession>Q8CN01</accession>